<dbReference type="EMBL" id="FM204883">
    <property type="protein sequence ID" value="CAW92016.1"/>
    <property type="molecule type" value="Genomic_DNA"/>
</dbReference>
<dbReference type="RefSeq" id="WP_002986602.1">
    <property type="nucleotide sequence ID" value="NC_012471.1"/>
</dbReference>
<dbReference type="SMR" id="C0M8M4"/>
<dbReference type="GeneID" id="83703931"/>
<dbReference type="KEGG" id="seu:SEQ_0082"/>
<dbReference type="HOGENOM" id="CLU_074407_2_2_9"/>
<dbReference type="OrthoDB" id="9809073at2"/>
<dbReference type="Proteomes" id="UP000001365">
    <property type="component" value="Chromosome"/>
</dbReference>
<dbReference type="GO" id="GO:0022625">
    <property type="term" value="C:cytosolic large ribosomal subunit"/>
    <property type="evidence" value="ECO:0007669"/>
    <property type="project" value="TreeGrafter"/>
</dbReference>
<dbReference type="GO" id="GO:0003735">
    <property type="term" value="F:structural constituent of ribosome"/>
    <property type="evidence" value="ECO:0007669"/>
    <property type="project" value="InterPro"/>
</dbReference>
<dbReference type="GO" id="GO:0006412">
    <property type="term" value="P:translation"/>
    <property type="evidence" value="ECO:0007669"/>
    <property type="project" value="UniProtKB-UniRule"/>
</dbReference>
<dbReference type="FunFam" id="3.90.1030.10:FF:000002">
    <property type="entry name" value="50S ribosomal protein L17"/>
    <property type="match status" value="1"/>
</dbReference>
<dbReference type="Gene3D" id="3.90.1030.10">
    <property type="entry name" value="Ribosomal protein L17"/>
    <property type="match status" value="1"/>
</dbReference>
<dbReference type="HAMAP" id="MF_01368">
    <property type="entry name" value="Ribosomal_bL17"/>
    <property type="match status" value="1"/>
</dbReference>
<dbReference type="InterPro" id="IPR000456">
    <property type="entry name" value="Ribosomal_bL17"/>
</dbReference>
<dbReference type="InterPro" id="IPR047859">
    <property type="entry name" value="Ribosomal_bL17_CS"/>
</dbReference>
<dbReference type="InterPro" id="IPR036373">
    <property type="entry name" value="Ribosomal_bL17_sf"/>
</dbReference>
<dbReference type="NCBIfam" id="TIGR00059">
    <property type="entry name" value="L17"/>
    <property type="match status" value="1"/>
</dbReference>
<dbReference type="PANTHER" id="PTHR14413:SF16">
    <property type="entry name" value="LARGE RIBOSOMAL SUBUNIT PROTEIN BL17M"/>
    <property type="match status" value="1"/>
</dbReference>
<dbReference type="PANTHER" id="PTHR14413">
    <property type="entry name" value="RIBOSOMAL PROTEIN L17"/>
    <property type="match status" value="1"/>
</dbReference>
<dbReference type="Pfam" id="PF01196">
    <property type="entry name" value="Ribosomal_L17"/>
    <property type="match status" value="1"/>
</dbReference>
<dbReference type="SUPFAM" id="SSF64263">
    <property type="entry name" value="Prokaryotic ribosomal protein L17"/>
    <property type="match status" value="1"/>
</dbReference>
<dbReference type="PROSITE" id="PS01167">
    <property type="entry name" value="RIBOSOMAL_L17"/>
    <property type="match status" value="1"/>
</dbReference>
<gene>
    <name evidence="1" type="primary">rplQ</name>
    <name type="ordered locus">SEQ_0082</name>
</gene>
<keyword id="KW-0687">Ribonucleoprotein</keyword>
<keyword id="KW-0689">Ribosomal protein</keyword>
<protein>
    <recommendedName>
        <fullName evidence="1">Large ribosomal subunit protein bL17</fullName>
    </recommendedName>
    <alternativeName>
        <fullName evidence="2">50S ribosomal protein L17</fullName>
    </alternativeName>
</protein>
<evidence type="ECO:0000255" key="1">
    <source>
        <dbReference type="HAMAP-Rule" id="MF_01368"/>
    </source>
</evidence>
<evidence type="ECO:0000305" key="2"/>
<organism>
    <name type="scientific">Streptococcus equi subsp. equi (strain 4047)</name>
    <dbReference type="NCBI Taxonomy" id="553482"/>
    <lineage>
        <taxon>Bacteria</taxon>
        <taxon>Bacillati</taxon>
        <taxon>Bacillota</taxon>
        <taxon>Bacilli</taxon>
        <taxon>Lactobacillales</taxon>
        <taxon>Streptococcaceae</taxon>
        <taxon>Streptococcus</taxon>
    </lineage>
</organism>
<feature type="chain" id="PRO_1000184044" description="Large ribosomal subunit protein bL17">
    <location>
        <begin position="1"/>
        <end position="128"/>
    </location>
</feature>
<comment type="subunit">
    <text evidence="1">Part of the 50S ribosomal subunit. Contacts protein L32.</text>
</comment>
<comment type="similarity">
    <text evidence="1">Belongs to the bacterial ribosomal protein bL17 family.</text>
</comment>
<reference key="1">
    <citation type="journal article" date="2009" name="PLoS Pathog.">
        <title>Genomic evidence for the evolution of Streptococcus equi: host restriction, increased virulence, and genetic exchange with human pathogens.</title>
        <authorList>
            <person name="Holden M.T.G."/>
            <person name="Heather Z."/>
            <person name="Paillot R."/>
            <person name="Steward K.F."/>
            <person name="Webb K."/>
            <person name="Ainslie F."/>
            <person name="Jourdan T."/>
            <person name="Bason N.C."/>
            <person name="Holroyd N.E."/>
            <person name="Mungall K."/>
            <person name="Quail M.A."/>
            <person name="Sanders M."/>
            <person name="Simmonds M."/>
            <person name="Willey D."/>
            <person name="Brooks K."/>
            <person name="Aanensen D.M."/>
            <person name="Spratt B.G."/>
            <person name="Jolley K.A."/>
            <person name="Maiden M.C.J."/>
            <person name="Kehoe M."/>
            <person name="Chanter N."/>
            <person name="Bentley S.D."/>
            <person name="Robinson C."/>
            <person name="Maskell D.J."/>
            <person name="Parkhill J."/>
            <person name="Waller A.S."/>
        </authorList>
    </citation>
    <scope>NUCLEOTIDE SEQUENCE [LARGE SCALE GENOMIC DNA]</scope>
    <source>
        <strain>4047</strain>
    </source>
</reference>
<name>RL17_STRE4</name>
<sequence length="128" mass="14522">MAYRKLGRTSSQRKAMLRDLTTDLLINESIVTTEARAKEIRKTVEKMITLGKRGDLHARRQAAAYVRNEIASENYDEATDKYTSTTALQKLFSEIAPRYAERNGGYTRILKTEPRRGDAAPMAIIELV</sequence>
<proteinExistence type="inferred from homology"/>
<accession>C0M8M4</accession>